<keyword id="KW-0227">DNA damage</keyword>
<keyword id="KW-0233">DNA recombination</keyword>
<keyword id="KW-0234">DNA repair</keyword>
<keyword id="KW-0479">Metal-binding</keyword>
<keyword id="KW-1185">Reference proteome</keyword>
<keyword id="KW-0862">Zinc</keyword>
<keyword id="KW-0863">Zinc-finger</keyword>
<name>RECR_ACAM1</name>
<dbReference type="EMBL" id="CP000828">
    <property type="protein sequence ID" value="ABW28902.1"/>
    <property type="molecule type" value="Genomic_DNA"/>
</dbReference>
<dbReference type="RefSeq" id="WP_010472144.1">
    <property type="nucleotide sequence ID" value="NC_009925.1"/>
</dbReference>
<dbReference type="SMR" id="B0C882"/>
<dbReference type="STRING" id="329726.AM1_3917"/>
<dbReference type="KEGG" id="amr:AM1_3917"/>
<dbReference type="eggNOG" id="COG0353">
    <property type="taxonomic scope" value="Bacteria"/>
</dbReference>
<dbReference type="HOGENOM" id="CLU_060739_1_0_3"/>
<dbReference type="OrthoDB" id="9802672at2"/>
<dbReference type="Proteomes" id="UP000000268">
    <property type="component" value="Chromosome"/>
</dbReference>
<dbReference type="GO" id="GO:0003677">
    <property type="term" value="F:DNA binding"/>
    <property type="evidence" value="ECO:0007669"/>
    <property type="project" value="UniProtKB-UniRule"/>
</dbReference>
<dbReference type="GO" id="GO:0008270">
    <property type="term" value="F:zinc ion binding"/>
    <property type="evidence" value="ECO:0007669"/>
    <property type="project" value="UniProtKB-KW"/>
</dbReference>
<dbReference type="GO" id="GO:0006310">
    <property type="term" value="P:DNA recombination"/>
    <property type="evidence" value="ECO:0007669"/>
    <property type="project" value="UniProtKB-UniRule"/>
</dbReference>
<dbReference type="GO" id="GO:0006281">
    <property type="term" value="P:DNA repair"/>
    <property type="evidence" value="ECO:0007669"/>
    <property type="project" value="UniProtKB-UniRule"/>
</dbReference>
<dbReference type="CDD" id="cd01025">
    <property type="entry name" value="TOPRIM_recR"/>
    <property type="match status" value="1"/>
</dbReference>
<dbReference type="Gene3D" id="3.40.1360.10">
    <property type="match status" value="1"/>
</dbReference>
<dbReference type="Gene3D" id="6.10.250.240">
    <property type="match status" value="1"/>
</dbReference>
<dbReference type="Gene3D" id="1.10.8.420">
    <property type="entry name" value="RecR Domain 1"/>
    <property type="match status" value="1"/>
</dbReference>
<dbReference type="HAMAP" id="MF_00017">
    <property type="entry name" value="RecR"/>
    <property type="match status" value="1"/>
</dbReference>
<dbReference type="InterPro" id="IPR000093">
    <property type="entry name" value="DNA_Rcmb_RecR"/>
</dbReference>
<dbReference type="InterPro" id="IPR003583">
    <property type="entry name" value="Hlx-hairpin-Hlx_DNA-bd_motif"/>
</dbReference>
<dbReference type="InterPro" id="IPR023627">
    <property type="entry name" value="Rcmb_RecR"/>
</dbReference>
<dbReference type="InterPro" id="IPR015967">
    <property type="entry name" value="Rcmb_RecR_Znf"/>
</dbReference>
<dbReference type="InterPro" id="IPR006171">
    <property type="entry name" value="TOPRIM_dom"/>
</dbReference>
<dbReference type="InterPro" id="IPR034137">
    <property type="entry name" value="TOPRIM_RecR"/>
</dbReference>
<dbReference type="NCBIfam" id="TIGR00615">
    <property type="entry name" value="recR"/>
    <property type="match status" value="1"/>
</dbReference>
<dbReference type="PANTHER" id="PTHR30446">
    <property type="entry name" value="RECOMBINATION PROTEIN RECR"/>
    <property type="match status" value="1"/>
</dbReference>
<dbReference type="PANTHER" id="PTHR30446:SF0">
    <property type="entry name" value="RECOMBINATION PROTEIN RECR"/>
    <property type="match status" value="1"/>
</dbReference>
<dbReference type="Pfam" id="PF21175">
    <property type="entry name" value="RecR_C"/>
    <property type="match status" value="1"/>
</dbReference>
<dbReference type="Pfam" id="PF21176">
    <property type="entry name" value="RecR_HhH"/>
    <property type="match status" value="1"/>
</dbReference>
<dbReference type="Pfam" id="PF02132">
    <property type="entry name" value="RecR_ZnF"/>
    <property type="match status" value="1"/>
</dbReference>
<dbReference type="Pfam" id="PF13662">
    <property type="entry name" value="Toprim_4"/>
    <property type="match status" value="1"/>
</dbReference>
<dbReference type="SMART" id="SM00278">
    <property type="entry name" value="HhH1"/>
    <property type="match status" value="1"/>
</dbReference>
<dbReference type="SMART" id="SM00493">
    <property type="entry name" value="TOPRIM"/>
    <property type="match status" value="1"/>
</dbReference>
<dbReference type="SUPFAM" id="SSF111304">
    <property type="entry name" value="Recombination protein RecR"/>
    <property type="match status" value="1"/>
</dbReference>
<dbReference type="PROSITE" id="PS01300">
    <property type="entry name" value="RECR"/>
    <property type="match status" value="1"/>
</dbReference>
<dbReference type="PROSITE" id="PS50880">
    <property type="entry name" value="TOPRIM"/>
    <property type="match status" value="1"/>
</dbReference>
<gene>
    <name evidence="1" type="primary">recR</name>
    <name type="ordered locus">AM1_3917</name>
</gene>
<organism>
    <name type="scientific">Acaryochloris marina (strain MBIC 11017)</name>
    <dbReference type="NCBI Taxonomy" id="329726"/>
    <lineage>
        <taxon>Bacteria</taxon>
        <taxon>Bacillati</taxon>
        <taxon>Cyanobacteriota</taxon>
        <taxon>Cyanophyceae</taxon>
        <taxon>Acaryochloridales</taxon>
        <taxon>Acaryochloridaceae</taxon>
        <taxon>Acaryochloris</taxon>
    </lineage>
</organism>
<evidence type="ECO:0000255" key="1">
    <source>
        <dbReference type="HAMAP-Rule" id="MF_00017"/>
    </source>
</evidence>
<sequence length="200" mass="21998">MSTVYTRPLARLVEQLQRLPGIGPKSAQRLALHLLKRPTAEVEALANALIEAKQQVGFCSVCFHLSADPVCDICRAPSRDKTVICVVADSRDVIALEKTREFKGQYHVLGGLISPMDGIGPDQLNVQPLIRRVHQTKTQEVILAINPSVEGETTTLYVGQLLKPFTRVTRIAFGLPMGGDLEYADEVTLARALEGRRDLD</sequence>
<reference key="1">
    <citation type="journal article" date="2008" name="Proc. Natl. Acad. Sci. U.S.A.">
        <title>Niche adaptation and genome expansion in the chlorophyll d-producing cyanobacterium Acaryochloris marina.</title>
        <authorList>
            <person name="Swingley W.D."/>
            <person name="Chen M."/>
            <person name="Cheung P.C."/>
            <person name="Conrad A.L."/>
            <person name="Dejesa L.C."/>
            <person name="Hao J."/>
            <person name="Honchak B.M."/>
            <person name="Karbach L.E."/>
            <person name="Kurdoglu A."/>
            <person name="Lahiri S."/>
            <person name="Mastrian S.D."/>
            <person name="Miyashita H."/>
            <person name="Page L."/>
            <person name="Ramakrishna P."/>
            <person name="Satoh S."/>
            <person name="Sattley W.M."/>
            <person name="Shimada Y."/>
            <person name="Taylor H.L."/>
            <person name="Tomo T."/>
            <person name="Tsuchiya T."/>
            <person name="Wang Z.T."/>
            <person name="Raymond J."/>
            <person name="Mimuro M."/>
            <person name="Blankenship R.E."/>
            <person name="Touchman J.W."/>
        </authorList>
    </citation>
    <scope>NUCLEOTIDE SEQUENCE [LARGE SCALE GENOMIC DNA]</scope>
    <source>
        <strain>MBIC 11017</strain>
    </source>
</reference>
<feature type="chain" id="PRO_1000074109" description="Recombination protein RecR">
    <location>
        <begin position="1"/>
        <end position="200"/>
    </location>
</feature>
<feature type="domain" description="Toprim" evidence="1">
    <location>
        <begin position="82"/>
        <end position="176"/>
    </location>
</feature>
<feature type="zinc finger region" description="C4-type" evidence="1">
    <location>
        <begin position="59"/>
        <end position="74"/>
    </location>
</feature>
<accession>B0C882</accession>
<protein>
    <recommendedName>
        <fullName evidence="1">Recombination protein RecR</fullName>
    </recommendedName>
</protein>
<proteinExistence type="inferred from homology"/>
<comment type="function">
    <text evidence="1">May play a role in DNA repair. It seems to be involved in an RecBC-independent recombinational process of DNA repair. It may act with RecF and RecO.</text>
</comment>
<comment type="similarity">
    <text evidence="1">Belongs to the RecR family.</text>
</comment>